<accession>B6ENH6</accession>
<dbReference type="EMBL" id="FM178379">
    <property type="protein sequence ID" value="CAQ78317.1"/>
    <property type="molecule type" value="Genomic_DNA"/>
</dbReference>
<dbReference type="SMR" id="B6ENH6"/>
<dbReference type="KEGG" id="vsa:VSAL_I0632"/>
<dbReference type="eggNOG" id="COG0249">
    <property type="taxonomic scope" value="Bacteria"/>
</dbReference>
<dbReference type="HOGENOM" id="CLU_002472_4_0_6"/>
<dbReference type="Proteomes" id="UP000001730">
    <property type="component" value="Chromosome 1"/>
</dbReference>
<dbReference type="GO" id="GO:0005829">
    <property type="term" value="C:cytosol"/>
    <property type="evidence" value="ECO:0007669"/>
    <property type="project" value="TreeGrafter"/>
</dbReference>
<dbReference type="GO" id="GO:0005524">
    <property type="term" value="F:ATP binding"/>
    <property type="evidence" value="ECO:0007669"/>
    <property type="project" value="UniProtKB-UniRule"/>
</dbReference>
<dbReference type="GO" id="GO:0140664">
    <property type="term" value="F:ATP-dependent DNA damage sensor activity"/>
    <property type="evidence" value="ECO:0007669"/>
    <property type="project" value="InterPro"/>
</dbReference>
<dbReference type="GO" id="GO:0003684">
    <property type="term" value="F:damaged DNA binding"/>
    <property type="evidence" value="ECO:0007669"/>
    <property type="project" value="UniProtKB-UniRule"/>
</dbReference>
<dbReference type="GO" id="GO:0030983">
    <property type="term" value="F:mismatched DNA binding"/>
    <property type="evidence" value="ECO:0007669"/>
    <property type="project" value="InterPro"/>
</dbReference>
<dbReference type="GO" id="GO:0006298">
    <property type="term" value="P:mismatch repair"/>
    <property type="evidence" value="ECO:0007669"/>
    <property type="project" value="UniProtKB-UniRule"/>
</dbReference>
<dbReference type="CDD" id="cd03284">
    <property type="entry name" value="ABC_MutS1"/>
    <property type="match status" value="1"/>
</dbReference>
<dbReference type="FunFam" id="1.10.1420.10:FF:000002">
    <property type="entry name" value="DNA mismatch repair protein MutS"/>
    <property type="match status" value="1"/>
</dbReference>
<dbReference type="FunFam" id="3.30.420.110:FF:000001">
    <property type="entry name" value="DNA mismatch repair protein MutS"/>
    <property type="match status" value="1"/>
</dbReference>
<dbReference type="FunFam" id="3.40.1170.10:FF:000001">
    <property type="entry name" value="DNA mismatch repair protein MutS"/>
    <property type="match status" value="1"/>
</dbReference>
<dbReference type="FunFam" id="3.40.50.300:FF:000283">
    <property type="entry name" value="DNA mismatch repair protein MutS"/>
    <property type="match status" value="1"/>
</dbReference>
<dbReference type="Gene3D" id="1.10.1420.10">
    <property type="match status" value="2"/>
</dbReference>
<dbReference type="Gene3D" id="6.10.140.430">
    <property type="match status" value="1"/>
</dbReference>
<dbReference type="Gene3D" id="3.40.1170.10">
    <property type="entry name" value="DNA repair protein MutS, domain I"/>
    <property type="match status" value="1"/>
</dbReference>
<dbReference type="Gene3D" id="3.30.420.110">
    <property type="entry name" value="MutS, connector domain"/>
    <property type="match status" value="1"/>
</dbReference>
<dbReference type="Gene3D" id="3.40.50.300">
    <property type="entry name" value="P-loop containing nucleotide triphosphate hydrolases"/>
    <property type="match status" value="1"/>
</dbReference>
<dbReference type="HAMAP" id="MF_00096">
    <property type="entry name" value="MutS"/>
    <property type="match status" value="1"/>
</dbReference>
<dbReference type="InterPro" id="IPR005748">
    <property type="entry name" value="DNA_mismatch_repair_MutS"/>
</dbReference>
<dbReference type="InterPro" id="IPR007695">
    <property type="entry name" value="DNA_mismatch_repair_MutS-lik_N"/>
</dbReference>
<dbReference type="InterPro" id="IPR017261">
    <property type="entry name" value="DNA_mismatch_repair_MutS/MSH"/>
</dbReference>
<dbReference type="InterPro" id="IPR000432">
    <property type="entry name" value="DNA_mismatch_repair_MutS_C"/>
</dbReference>
<dbReference type="InterPro" id="IPR007861">
    <property type="entry name" value="DNA_mismatch_repair_MutS_clamp"/>
</dbReference>
<dbReference type="InterPro" id="IPR007696">
    <property type="entry name" value="DNA_mismatch_repair_MutS_core"/>
</dbReference>
<dbReference type="InterPro" id="IPR016151">
    <property type="entry name" value="DNA_mismatch_repair_MutS_N"/>
</dbReference>
<dbReference type="InterPro" id="IPR036187">
    <property type="entry name" value="DNA_mismatch_repair_MutS_sf"/>
</dbReference>
<dbReference type="InterPro" id="IPR007860">
    <property type="entry name" value="DNA_mmatch_repair_MutS_con_dom"/>
</dbReference>
<dbReference type="InterPro" id="IPR001611">
    <property type="entry name" value="Leu-rich_rpt"/>
</dbReference>
<dbReference type="InterPro" id="IPR045076">
    <property type="entry name" value="MutS"/>
</dbReference>
<dbReference type="InterPro" id="IPR036678">
    <property type="entry name" value="MutS_con_dom_sf"/>
</dbReference>
<dbReference type="InterPro" id="IPR027417">
    <property type="entry name" value="P-loop_NTPase"/>
</dbReference>
<dbReference type="NCBIfam" id="TIGR01070">
    <property type="entry name" value="mutS1"/>
    <property type="match status" value="1"/>
</dbReference>
<dbReference type="NCBIfam" id="NF003810">
    <property type="entry name" value="PRK05399.1"/>
    <property type="match status" value="1"/>
</dbReference>
<dbReference type="PANTHER" id="PTHR11361:SF34">
    <property type="entry name" value="DNA MISMATCH REPAIR PROTEIN MSH1, MITOCHONDRIAL"/>
    <property type="match status" value="1"/>
</dbReference>
<dbReference type="PANTHER" id="PTHR11361">
    <property type="entry name" value="DNA MISMATCH REPAIR PROTEIN MUTS FAMILY MEMBER"/>
    <property type="match status" value="1"/>
</dbReference>
<dbReference type="Pfam" id="PF01624">
    <property type="entry name" value="MutS_I"/>
    <property type="match status" value="1"/>
</dbReference>
<dbReference type="Pfam" id="PF05188">
    <property type="entry name" value="MutS_II"/>
    <property type="match status" value="1"/>
</dbReference>
<dbReference type="Pfam" id="PF05192">
    <property type="entry name" value="MutS_III"/>
    <property type="match status" value="1"/>
</dbReference>
<dbReference type="Pfam" id="PF05190">
    <property type="entry name" value="MutS_IV"/>
    <property type="match status" value="1"/>
</dbReference>
<dbReference type="Pfam" id="PF00488">
    <property type="entry name" value="MutS_V"/>
    <property type="match status" value="1"/>
</dbReference>
<dbReference type="PIRSF" id="PIRSF037677">
    <property type="entry name" value="DNA_mis_repair_Msh6"/>
    <property type="match status" value="1"/>
</dbReference>
<dbReference type="SMART" id="SM00534">
    <property type="entry name" value="MUTSac"/>
    <property type="match status" value="1"/>
</dbReference>
<dbReference type="SMART" id="SM00533">
    <property type="entry name" value="MUTSd"/>
    <property type="match status" value="1"/>
</dbReference>
<dbReference type="SUPFAM" id="SSF55271">
    <property type="entry name" value="DNA repair protein MutS, domain I"/>
    <property type="match status" value="1"/>
</dbReference>
<dbReference type="SUPFAM" id="SSF53150">
    <property type="entry name" value="DNA repair protein MutS, domain II"/>
    <property type="match status" value="1"/>
</dbReference>
<dbReference type="SUPFAM" id="SSF48334">
    <property type="entry name" value="DNA repair protein MutS, domain III"/>
    <property type="match status" value="1"/>
</dbReference>
<dbReference type="SUPFAM" id="SSF52540">
    <property type="entry name" value="P-loop containing nucleoside triphosphate hydrolases"/>
    <property type="match status" value="1"/>
</dbReference>
<dbReference type="PROSITE" id="PS00486">
    <property type="entry name" value="DNA_MISMATCH_REPAIR_2"/>
    <property type="match status" value="1"/>
</dbReference>
<dbReference type="PROSITE" id="PS51450">
    <property type="entry name" value="LRR"/>
    <property type="match status" value="1"/>
</dbReference>
<organism>
    <name type="scientific">Aliivibrio salmonicida (strain LFI1238)</name>
    <name type="common">Vibrio salmonicida (strain LFI1238)</name>
    <dbReference type="NCBI Taxonomy" id="316275"/>
    <lineage>
        <taxon>Bacteria</taxon>
        <taxon>Pseudomonadati</taxon>
        <taxon>Pseudomonadota</taxon>
        <taxon>Gammaproteobacteria</taxon>
        <taxon>Vibrionales</taxon>
        <taxon>Vibrionaceae</taxon>
        <taxon>Aliivibrio</taxon>
    </lineage>
</organism>
<sequence length="855" mass="95412">MAIKSTEKHTPMMQQYLRLKSENPDILLFYRMGDFYELFYDDAKRASQLLEISLTKRGSSAGEPIPMAGLPYHAVEGYLAKLVQQGESVAICEQIGDPATSKGPVERKVVRIVTPGTVTDEALLPERFDNLIAAIYHHKGQFGYATLDITSGRFKVSEPSTEESMLAELQRTSPTELLFSEDFEPVHLLEKRNGNRRRPVWEFELDTAKQQLNQQFGTRDLVGFGVENAEFGLCAAGCLIQYVKDTQRTTLPHIRSIVMDRQDDSVILDAATRRNLEITQNLAGGFNHTLSEVLDHTSTAMGSRLLKRWLHQPIRTHDVLNQRLDAIGELKSNGLYAELSPQLKQIGDVERILARLALRSARPRDLARLRNALQQLPELAQSTQAFEQTHLLELASLAQPIDSICELLERAVKENPPVVIRDGGVLADGYNEELDQWRDLANGAALFLSKLEQEERERHDIDTLKVGYNNVHGFYIQISKGQSHKAPAHYVRRQTLKNAERYIIPELKAHEDKVLSSKSKALAIEKKLWEELFDQLLPHLEQLQLMANAISELDVLSNLAERADTLNYCRPTLSSDIGMKIEGGRHPVVEQVMSDPFIANPINLNDDRKMLIITGPNMGGKSTYMRQTALIALMAHVGCYVPADSAHIGLLDRIFTRIGASDDLASGRSTFMVEMTETANILHNATQHSLVLMDEIGRGTSTYDGLSLAWASAEWLATKINAMTLFATHYFELTELPNLFSGLANVHLDAVEHGDEIAFMHAVQEGAANKSYGLAVASLAGVPKAVIKKAKQKLQQLENGQPKNQSLTSTQIKQEHQLSLIPEPSEVEEALAKVNPDDLSPRQALEALYRLKALL</sequence>
<name>MUTS_ALISL</name>
<keyword id="KW-0067">ATP-binding</keyword>
<keyword id="KW-0227">DNA damage</keyword>
<keyword id="KW-0234">DNA repair</keyword>
<keyword id="KW-0238">DNA-binding</keyword>
<keyword id="KW-0547">Nucleotide-binding</keyword>
<protein>
    <recommendedName>
        <fullName evidence="1">DNA mismatch repair protein MutS</fullName>
    </recommendedName>
</protein>
<feature type="chain" id="PRO_1000093605" description="DNA mismatch repair protein MutS">
    <location>
        <begin position="1"/>
        <end position="855"/>
    </location>
</feature>
<feature type="binding site" evidence="1">
    <location>
        <begin position="615"/>
        <end position="622"/>
    </location>
    <ligand>
        <name>ATP</name>
        <dbReference type="ChEBI" id="CHEBI:30616"/>
    </ligand>
</feature>
<proteinExistence type="inferred from homology"/>
<reference key="1">
    <citation type="journal article" date="2008" name="BMC Genomics">
        <title>The genome sequence of the fish pathogen Aliivibrio salmonicida strain LFI1238 shows extensive evidence of gene decay.</title>
        <authorList>
            <person name="Hjerde E."/>
            <person name="Lorentzen M.S."/>
            <person name="Holden M.T."/>
            <person name="Seeger K."/>
            <person name="Paulsen S."/>
            <person name="Bason N."/>
            <person name="Churcher C."/>
            <person name="Harris D."/>
            <person name="Norbertczak H."/>
            <person name="Quail M.A."/>
            <person name="Sanders S."/>
            <person name="Thurston S."/>
            <person name="Parkhill J."/>
            <person name="Willassen N.P."/>
            <person name="Thomson N.R."/>
        </authorList>
    </citation>
    <scope>NUCLEOTIDE SEQUENCE [LARGE SCALE GENOMIC DNA]</scope>
    <source>
        <strain>LFI1238</strain>
    </source>
</reference>
<comment type="function">
    <text evidence="1">This protein is involved in the repair of mismatches in DNA. It is possible that it carries out the mismatch recognition step. This protein has a weak ATPase activity.</text>
</comment>
<comment type="similarity">
    <text evidence="1">Belongs to the DNA mismatch repair MutS family.</text>
</comment>
<gene>
    <name evidence="1" type="primary">mutS</name>
    <name type="ordered locus">VSAL_I0632</name>
</gene>
<evidence type="ECO:0000255" key="1">
    <source>
        <dbReference type="HAMAP-Rule" id="MF_00096"/>
    </source>
</evidence>